<sequence length="177" mass="19452">MADFTTIARPYAKAAFDFAVEKGQLDQWGQMLSFAAEVAQNEQISELLSGSMSADKLAELFIAICGEQVDEFGQNLLKVMAENGRLAALPDVCTLFFVLKKEHEKEIDVEVISATELSDEQCANISQKLEQRLERKVKLNCSVDEALLGGVIIRAGDLVIDNSARGRLNRLSDALQS</sequence>
<feature type="chain" id="PRO_0000382171" description="ATP synthase subunit delta">
    <location>
        <begin position="1"/>
        <end position="177"/>
    </location>
</feature>
<accession>Q7MGH7</accession>
<keyword id="KW-0066">ATP synthesis</keyword>
<keyword id="KW-0997">Cell inner membrane</keyword>
<keyword id="KW-1003">Cell membrane</keyword>
<keyword id="KW-0139">CF(1)</keyword>
<keyword id="KW-0375">Hydrogen ion transport</keyword>
<keyword id="KW-0406">Ion transport</keyword>
<keyword id="KW-0472">Membrane</keyword>
<keyword id="KW-0813">Transport</keyword>
<reference key="1">
    <citation type="journal article" date="2003" name="Genome Res.">
        <title>Comparative genome analysis of Vibrio vulnificus, a marine pathogen.</title>
        <authorList>
            <person name="Chen C.-Y."/>
            <person name="Wu K.-M."/>
            <person name="Chang Y.-C."/>
            <person name="Chang C.-H."/>
            <person name="Tsai H.-C."/>
            <person name="Liao T.-L."/>
            <person name="Liu Y.-M."/>
            <person name="Chen H.-J."/>
            <person name="Shen A.B.-T."/>
            <person name="Li J.-C."/>
            <person name="Su T.-L."/>
            <person name="Shao C.-P."/>
            <person name="Lee C.-T."/>
            <person name="Hor L.-I."/>
            <person name="Tsai S.-F."/>
        </authorList>
    </citation>
    <scope>NUCLEOTIDE SEQUENCE [LARGE SCALE GENOMIC DNA]</scope>
    <source>
        <strain>YJ016</strain>
    </source>
</reference>
<gene>
    <name evidence="1" type="primary">atpH</name>
    <name type="ordered locus">VV3254</name>
</gene>
<comment type="function">
    <text evidence="1">F(1)F(0) ATP synthase produces ATP from ADP in the presence of a proton or sodium gradient. F-type ATPases consist of two structural domains, F(1) containing the extramembraneous catalytic core and F(0) containing the membrane proton channel, linked together by a central stalk and a peripheral stalk. During catalysis, ATP synthesis in the catalytic domain of F(1) is coupled via a rotary mechanism of the central stalk subunits to proton translocation.</text>
</comment>
<comment type="function">
    <text evidence="1">This protein is part of the stalk that links CF(0) to CF(1). It either transmits conformational changes from CF(0) to CF(1) or is implicated in proton conduction.</text>
</comment>
<comment type="subunit">
    <text evidence="1">F-type ATPases have 2 components, F(1) - the catalytic core - and F(0) - the membrane proton channel. F(1) has five subunits: alpha(3), beta(3), gamma(1), delta(1), epsilon(1). F(0) has three main subunits: a(1), b(2) and c(10-14). The alpha and beta chains form an alternating ring which encloses part of the gamma chain. F(1) is attached to F(0) by a central stalk formed by the gamma and epsilon chains, while a peripheral stalk is formed by the delta and b chains.</text>
</comment>
<comment type="subcellular location">
    <subcellularLocation>
        <location evidence="1">Cell inner membrane</location>
        <topology evidence="1">Peripheral membrane protein</topology>
    </subcellularLocation>
</comment>
<comment type="similarity">
    <text evidence="1">Belongs to the ATPase delta chain family.</text>
</comment>
<comment type="sequence caution" evidence="2">
    <conflict type="erroneous initiation">
        <sequence resource="EMBL-CDS" id="BAC96018"/>
    </conflict>
</comment>
<dbReference type="EMBL" id="BA000037">
    <property type="protein sequence ID" value="BAC96018.1"/>
    <property type="status" value="ALT_INIT"/>
    <property type="molecule type" value="Genomic_DNA"/>
</dbReference>
<dbReference type="RefSeq" id="WP_011079052.1">
    <property type="nucleotide sequence ID" value="NC_005139.1"/>
</dbReference>
<dbReference type="SMR" id="Q7MGH7"/>
<dbReference type="STRING" id="672.VV93_v1c29760"/>
<dbReference type="GeneID" id="93895307"/>
<dbReference type="KEGG" id="vvy:VV3254"/>
<dbReference type="eggNOG" id="COG0712">
    <property type="taxonomic scope" value="Bacteria"/>
</dbReference>
<dbReference type="HOGENOM" id="CLU_085114_3_0_6"/>
<dbReference type="Proteomes" id="UP000002675">
    <property type="component" value="Chromosome I"/>
</dbReference>
<dbReference type="GO" id="GO:0005886">
    <property type="term" value="C:plasma membrane"/>
    <property type="evidence" value="ECO:0007669"/>
    <property type="project" value="UniProtKB-SubCell"/>
</dbReference>
<dbReference type="GO" id="GO:0045259">
    <property type="term" value="C:proton-transporting ATP synthase complex"/>
    <property type="evidence" value="ECO:0007669"/>
    <property type="project" value="UniProtKB-KW"/>
</dbReference>
<dbReference type="GO" id="GO:0046933">
    <property type="term" value="F:proton-transporting ATP synthase activity, rotational mechanism"/>
    <property type="evidence" value="ECO:0007669"/>
    <property type="project" value="UniProtKB-UniRule"/>
</dbReference>
<dbReference type="Gene3D" id="1.10.520.20">
    <property type="entry name" value="N-terminal domain of the delta subunit of the F1F0-ATP synthase"/>
    <property type="match status" value="1"/>
</dbReference>
<dbReference type="HAMAP" id="MF_01416">
    <property type="entry name" value="ATP_synth_delta_bact"/>
    <property type="match status" value="1"/>
</dbReference>
<dbReference type="InterPro" id="IPR026015">
    <property type="entry name" value="ATP_synth_OSCP/delta_N_sf"/>
</dbReference>
<dbReference type="InterPro" id="IPR020781">
    <property type="entry name" value="ATPase_OSCP/d_CS"/>
</dbReference>
<dbReference type="InterPro" id="IPR000711">
    <property type="entry name" value="ATPase_OSCP/dsu"/>
</dbReference>
<dbReference type="NCBIfam" id="TIGR01145">
    <property type="entry name" value="ATP_synt_delta"/>
    <property type="match status" value="1"/>
</dbReference>
<dbReference type="NCBIfam" id="NF004402">
    <property type="entry name" value="PRK05758.2-2"/>
    <property type="match status" value="1"/>
</dbReference>
<dbReference type="NCBIfam" id="NF004404">
    <property type="entry name" value="PRK05758.2-5"/>
    <property type="match status" value="1"/>
</dbReference>
<dbReference type="PANTHER" id="PTHR11910">
    <property type="entry name" value="ATP SYNTHASE DELTA CHAIN"/>
    <property type="match status" value="1"/>
</dbReference>
<dbReference type="Pfam" id="PF00213">
    <property type="entry name" value="OSCP"/>
    <property type="match status" value="1"/>
</dbReference>
<dbReference type="PRINTS" id="PR00125">
    <property type="entry name" value="ATPASEDELTA"/>
</dbReference>
<dbReference type="SUPFAM" id="SSF47928">
    <property type="entry name" value="N-terminal domain of the delta subunit of the F1F0-ATP synthase"/>
    <property type="match status" value="1"/>
</dbReference>
<dbReference type="PROSITE" id="PS00389">
    <property type="entry name" value="ATPASE_DELTA"/>
    <property type="match status" value="1"/>
</dbReference>
<proteinExistence type="inferred from homology"/>
<evidence type="ECO:0000255" key="1">
    <source>
        <dbReference type="HAMAP-Rule" id="MF_01416"/>
    </source>
</evidence>
<evidence type="ECO:0000305" key="2"/>
<protein>
    <recommendedName>
        <fullName evidence="1">ATP synthase subunit delta</fullName>
    </recommendedName>
    <alternativeName>
        <fullName evidence="1">ATP synthase F(1) sector subunit delta</fullName>
    </alternativeName>
    <alternativeName>
        <fullName evidence="1">F-type ATPase subunit delta</fullName>
        <shortName evidence="1">F-ATPase subunit delta</shortName>
    </alternativeName>
</protein>
<organism>
    <name type="scientific">Vibrio vulnificus (strain YJ016)</name>
    <dbReference type="NCBI Taxonomy" id="196600"/>
    <lineage>
        <taxon>Bacteria</taxon>
        <taxon>Pseudomonadati</taxon>
        <taxon>Pseudomonadota</taxon>
        <taxon>Gammaproteobacteria</taxon>
        <taxon>Vibrionales</taxon>
        <taxon>Vibrionaceae</taxon>
        <taxon>Vibrio</taxon>
    </lineage>
</organism>
<name>ATPD_VIBVY</name>